<evidence type="ECO:0000255" key="1">
    <source>
        <dbReference type="HAMAP-Rule" id="MF_01203"/>
    </source>
</evidence>
<gene>
    <name evidence="1" type="primary">clcB</name>
    <name type="ordered locus">EcHS_A1666</name>
</gene>
<proteinExistence type="inferred from homology"/>
<organism>
    <name type="scientific">Escherichia coli O9:H4 (strain HS)</name>
    <dbReference type="NCBI Taxonomy" id="331112"/>
    <lineage>
        <taxon>Bacteria</taxon>
        <taxon>Pseudomonadati</taxon>
        <taxon>Pseudomonadota</taxon>
        <taxon>Gammaproteobacteria</taxon>
        <taxon>Enterobacterales</taxon>
        <taxon>Enterobacteriaceae</taxon>
        <taxon>Escherichia</taxon>
    </lineage>
</organism>
<feature type="chain" id="PRO_1000066132" description="Voltage-gated ClC-type chloride channel ClcB">
    <location>
        <begin position="1"/>
        <end position="418"/>
    </location>
</feature>
<feature type="transmembrane region" description="Helical" evidence="1">
    <location>
        <begin position="5"/>
        <end position="25"/>
    </location>
</feature>
<feature type="transmembrane region" description="Helical" evidence="1">
    <location>
        <begin position="54"/>
        <end position="74"/>
    </location>
</feature>
<feature type="transmembrane region" description="Helical" evidence="1">
    <location>
        <begin position="146"/>
        <end position="166"/>
    </location>
</feature>
<feature type="transmembrane region" description="Helical" evidence="1">
    <location>
        <begin position="168"/>
        <end position="188"/>
    </location>
</feature>
<feature type="transmembrane region" description="Helical" evidence="1">
    <location>
        <begin position="222"/>
        <end position="242"/>
    </location>
</feature>
<feature type="transmembrane region" description="Helical" evidence="1">
    <location>
        <begin position="260"/>
        <end position="280"/>
    </location>
</feature>
<feature type="transmembrane region" description="Helical" evidence="1">
    <location>
        <begin position="291"/>
        <end position="311"/>
    </location>
</feature>
<feature type="transmembrane region" description="Helical" evidence="1">
    <location>
        <begin position="316"/>
        <end position="336"/>
    </location>
</feature>
<feature type="transmembrane region" description="Helical" evidence="1">
    <location>
        <begin position="352"/>
        <end position="372"/>
    </location>
</feature>
<feature type="transmembrane region" description="Helical" evidence="1">
    <location>
        <begin position="380"/>
        <end position="400"/>
    </location>
</feature>
<sequence>MFRRLLIATVVGILAAFAVAGFRHAMLLLEWLFLNNDSGSLVNAATNLSPWRRLLTPALGGLAAGLLLMGWQKFTQQRPHAPTDYMEALQTDGQFDYAASLVKSLASLLVVTSGSAIGREGAMILLAALAASCFAQRFTPRQEWKLWIACGAAAGMAAAYRAPLAGSLFIAEVLFGTMMLASLGPVIISAVVALLVSNLINHSDALLYNVQLSVTVQARDYALIISTGVLAGLCGPLLLTLMNACHRGFVSLKLAPPCQLALGGLIVGLLSLFTPAVWGNGYSTVQSFLTAPPLLMIIAGIFLCKLCAVLASSGSGAPGGVFTPTLFIGLAIGMLYGRSLGLWFPDGEEITLLLGLTGMATLLAATTHAPIMSTLMICEMTGEYQLLPGLLIACVIASVISRTLHRDSIYRQHTAQHS</sequence>
<dbReference type="EMBL" id="CP000802">
    <property type="protein sequence ID" value="ABV05987.1"/>
    <property type="molecule type" value="Genomic_DNA"/>
</dbReference>
<dbReference type="SMR" id="A8A0D3"/>
<dbReference type="KEGG" id="ecx:EcHS_A1666"/>
<dbReference type="HOGENOM" id="CLU_015263_5_2_6"/>
<dbReference type="GO" id="GO:0034707">
    <property type="term" value="C:chloride channel complex"/>
    <property type="evidence" value="ECO:0007669"/>
    <property type="project" value="UniProtKB-KW"/>
</dbReference>
<dbReference type="GO" id="GO:0005886">
    <property type="term" value="C:plasma membrane"/>
    <property type="evidence" value="ECO:0007669"/>
    <property type="project" value="UniProtKB-SubCell"/>
</dbReference>
<dbReference type="GO" id="GO:0005247">
    <property type="term" value="F:voltage-gated chloride channel activity"/>
    <property type="evidence" value="ECO:0007669"/>
    <property type="project" value="UniProtKB-UniRule"/>
</dbReference>
<dbReference type="GO" id="GO:0010447">
    <property type="term" value="P:response to acidic pH"/>
    <property type="evidence" value="ECO:0007669"/>
    <property type="project" value="InterPro"/>
</dbReference>
<dbReference type="CDD" id="cd00400">
    <property type="entry name" value="Voltage_gated_ClC"/>
    <property type="match status" value="1"/>
</dbReference>
<dbReference type="FunFam" id="1.10.3080.10:FF:000010">
    <property type="entry name" value="Voltage-gated ClC-type chloride channel ClcB"/>
    <property type="match status" value="1"/>
</dbReference>
<dbReference type="Gene3D" id="1.10.3080.10">
    <property type="entry name" value="Clc chloride channel"/>
    <property type="match status" value="1"/>
</dbReference>
<dbReference type="HAMAP" id="MF_01203">
    <property type="entry name" value="CLC_ClcB"/>
    <property type="match status" value="1"/>
</dbReference>
<dbReference type="InterPro" id="IPR014743">
    <property type="entry name" value="Cl-channel_core"/>
</dbReference>
<dbReference type="InterPro" id="IPR023790">
    <property type="entry name" value="Cl-channel_volt-gated_ClcB"/>
</dbReference>
<dbReference type="InterPro" id="IPR001807">
    <property type="entry name" value="ClC"/>
</dbReference>
<dbReference type="InterPro" id="IPR050368">
    <property type="entry name" value="ClC-type_chloride_channel"/>
</dbReference>
<dbReference type="NCBIfam" id="NF002437">
    <property type="entry name" value="PRK01610.1"/>
    <property type="match status" value="1"/>
</dbReference>
<dbReference type="PANTHER" id="PTHR43427">
    <property type="entry name" value="CHLORIDE CHANNEL PROTEIN CLC-E"/>
    <property type="match status" value="1"/>
</dbReference>
<dbReference type="PANTHER" id="PTHR43427:SF6">
    <property type="entry name" value="CHLORIDE CHANNEL PROTEIN CLC-E"/>
    <property type="match status" value="1"/>
</dbReference>
<dbReference type="Pfam" id="PF00654">
    <property type="entry name" value="Voltage_CLC"/>
    <property type="match status" value="1"/>
</dbReference>
<dbReference type="PRINTS" id="PR00762">
    <property type="entry name" value="CLCHANNEL"/>
</dbReference>
<dbReference type="SUPFAM" id="SSF81340">
    <property type="entry name" value="Clc chloride channel"/>
    <property type="match status" value="1"/>
</dbReference>
<name>CLCB_ECOHS</name>
<comment type="function">
    <text evidence="1">Probably acts as an electrical shunt for an outwardly-directed proton pump that is linked to amino acid decarboxylation, as part of the extreme acid resistance (XAR) response.</text>
</comment>
<comment type="subcellular location">
    <subcellularLocation>
        <location evidence="1">Cell inner membrane</location>
        <topology evidence="1">Multi-pass membrane protein</topology>
    </subcellularLocation>
</comment>
<comment type="similarity">
    <text evidence="1">Belongs to the chloride channel (TC 2.A.49) family. ClcB subfamily.</text>
</comment>
<reference key="1">
    <citation type="journal article" date="2008" name="J. Bacteriol.">
        <title>The pangenome structure of Escherichia coli: comparative genomic analysis of E. coli commensal and pathogenic isolates.</title>
        <authorList>
            <person name="Rasko D.A."/>
            <person name="Rosovitz M.J."/>
            <person name="Myers G.S.A."/>
            <person name="Mongodin E.F."/>
            <person name="Fricke W.F."/>
            <person name="Gajer P."/>
            <person name="Crabtree J."/>
            <person name="Sebaihia M."/>
            <person name="Thomson N.R."/>
            <person name="Chaudhuri R."/>
            <person name="Henderson I.R."/>
            <person name="Sperandio V."/>
            <person name="Ravel J."/>
        </authorList>
    </citation>
    <scope>NUCLEOTIDE SEQUENCE [LARGE SCALE GENOMIC DNA]</scope>
    <source>
        <strain>HS</strain>
    </source>
</reference>
<keyword id="KW-0997">Cell inner membrane</keyword>
<keyword id="KW-1003">Cell membrane</keyword>
<keyword id="KW-0868">Chloride</keyword>
<keyword id="KW-0869">Chloride channel</keyword>
<keyword id="KW-0407">Ion channel</keyword>
<keyword id="KW-0406">Ion transport</keyword>
<keyword id="KW-0472">Membrane</keyword>
<keyword id="KW-0812">Transmembrane</keyword>
<keyword id="KW-1133">Transmembrane helix</keyword>
<keyword id="KW-0813">Transport</keyword>
<keyword id="KW-0851">Voltage-gated channel</keyword>
<protein>
    <recommendedName>
        <fullName evidence="1">Voltage-gated ClC-type chloride channel ClcB</fullName>
    </recommendedName>
</protein>
<accession>A8A0D3</accession>